<reference key="1">
    <citation type="submission" date="2016-08" db="EMBL/GenBank/DDBJ databases">
        <title>Comparative assembly of saltwater crocodile genome.</title>
        <authorList>
            <person name="Pham S."/>
            <person name="Fiddes I."/>
            <person name="Deran A."/>
            <person name="Armstrong J."/>
            <person name="Rice E.S."/>
            <person name="Paten B."/>
        </authorList>
    </citation>
    <scope>NUCLEOTIDE SEQUENCE [GENOMIC DNA]</scope>
    <source>
        <tissue evidence="8">Blood</tissue>
    </source>
</reference>
<reference key="2">
    <citation type="journal article" date="2022" name="Pediatr. Allergy Immunol.">
        <title>The first reptilian allergen and major allergen for fish-allergic patients: Crocodile beta-parvalbumin.</title>
        <authorList>
            <person name="Ruethers T."/>
            <person name="Nugraha R."/>
            <person name="Taki A.C."/>
            <person name="O'Malley A."/>
            <person name="Karnaneedi S."/>
            <person name="Zhang S."/>
            <person name="Kapingidza A.B."/>
            <person name="Mehr S."/>
            <person name="Kamath S.D."/>
            <person name="Chruszcz M."/>
            <person name="Mackay G."/>
            <person name="Campbell D.E."/>
            <person name="Lopata A.L."/>
        </authorList>
    </citation>
    <scope>IDENTIFICATION BY MASS SPECTROMETRY</scope>
    <scope>TISSUE SPECIFICITY</scope>
    <scope>ALLERGEN</scope>
    <scope>3D-STRUCTURE MODELING</scope>
    <scope>PREDICTED EPITOPE REGIONS</scope>
</reference>
<reference evidence="12" key="3">
    <citation type="journal article" date="2024" name="Protein Sci.">
        <title>Comparative studies of seafood and reptile alpha- and beta-parvalbumins.</title>
        <authorList>
            <person name="O'Malley A."/>
            <person name="Ray J.M."/>
            <person name="Kitlas P."/>
            <person name="Ruethers T."/>
            <person name="Kapingidza A.B."/>
            <person name="Cierpicki T."/>
            <person name="Lopata A."/>
            <person name="Kowal K."/>
            <person name="Chruszcz M."/>
        </authorList>
    </citation>
    <scope>X-RAY CRYSTALLOGRAPHY (3.20 ANGSTROMS) OF 2-109 AND GREEN FLUORESCENT PROTEIN (GFP) CHIMERA IN COMPLEX WITH CA(2+)</scope>
    <scope>BIOPHYSICOCHEMICAL PROPERTIES</scope>
    <scope>ALLERGEN</scope>
</reference>
<evidence type="ECO:0000250" key="1">
    <source>
        <dbReference type="UniProtKB" id="P86431"/>
    </source>
</evidence>
<evidence type="ECO:0000255" key="2">
    <source>
        <dbReference type="PROSITE-ProRule" id="PRU00448"/>
    </source>
</evidence>
<evidence type="ECO:0000255" key="3">
    <source>
        <dbReference type="RuleBase" id="RU368048"/>
    </source>
</evidence>
<evidence type="ECO:0000269" key="4">
    <source>
    </source>
</evidence>
<evidence type="ECO:0000269" key="5">
    <source>
    </source>
</evidence>
<evidence type="ECO:0000303" key="6">
    <source>
    </source>
</evidence>
<evidence type="ECO:0000303" key="7">
    <source>
    </source>
</evidence>
<evidence type="ECO:0000303" key="8">
    <source ref="1"/>
</evidence>
<evidence type="ECO:0000305" key="9"/>
<evidence type="ECO:0000312" key="10">
    <source>
        <dbReference type="Ensembl" id="ENSCPRP00005007053.1"/>
    </source>
</evidence>
<evidence type="ECO:0000312" key="11">
    <source>
        <dbReference type="Proteomes" id="UP000594220"/>
    </source>
</evidence>
<evidence type="ECO:0007744" key="12">
    <source>
        <dbReference type="PDB" id="9BCF"/>
    </source>
</evidence>
<sequence length="109" mass="11637">MAITDILSAKDIEAALSSCQAAESFNYKSFFSTVGLKGKSADQVKKVFGILDQDKSGFIEEDELQLFLKNFSSSARALTDAETKAFLAAGDTDGDGKIGVDEFQALVKA</sequence>
<protein>
    <recommendedName>
        <fullName evidence="9">Parvalbumin beta</fullName>
    </recommendedName>
    <alternativeName>
        <fullName evidence="6">Allergen Cro p 1</fullName>
    </alternativeName>
    <alternativeName>
        <fullName evidence="6 7">Beta-parvalbumin</fullName>
        <shortName evidence="6 7">Beta-PV</shortName>
    </alternativeName>
    <allergenName evidence="7">Cro p 1.0101</allergenName>
</protein>
<comment type="function">
    <text evidence="1 3 5">In muscle, parvalbumin is thought to be involved in relaxation after contraction (By similarity). It binds two calcium ions (PubMed:39584689).</text>
</comment>
<comment type="biophysicochemical properties">
    <temperatureDependence>
        <text evidence="5">Thermostable between pH 4.0-9.5. Average melting temperature (Tm) across all pH values is 74 degrees Celsius.</text>
    </temperatureDependence>
</comment>
<comment type="tissue specificity">
    <text evidence="4">Expressed in muscle (at protein level).</text>
</comment>
<comment type="allergen">
    <text evidence="4 5">Causes an allergic reaction in human (PubMed:35616897, PubMed:39584689). Natural protein binds to IgE in 61% of the 44 fish-allergic pediatric patients tested with IgE-binding to at least one parvalbumin from catfish and salmon (PubMed:35616897). Recombinant protein binds to IgE in 67% of the 6 fish-allergic pediatric patients tested (PubMed:35616897). Recombinant protein binds to IgE in 89% of the 9 fish-allergic Polish patients tested likely due to cross-reactivity of the parvalbumins (PubMed:39584689). Cross-reacts with Cyp c 1.0101 allergen from common carp (PubMed:39584689). Retains some of its IgE-binding in the presence of calcium-chelating EDTA (PubMed:39584689). Induces degranulation of human mast cells releasing beta-hexosaminidase from them (PubMed:35616897).</text>
</comment>
<comment type="similarity">
    <text evidence="3">Belongs to the parvalbumin family.</text>
</comment>
<feature type="chain" id="PRO_0000462447" description="Parvalbumin beta">
    <location>
        <begin position="1"/>
        <end position="109"/>
    </location>
</feature>
<feature type="domain" description="EF-hand 1" evidence="2">
    <location>
        <begin position="39"/>
        <end position="74"/>
    </location>
</feature>
<feature type="domain" description="EF-hand 2" evidence="2">
    <location>
        <begin position="78"/>
        <end position="109"/>
    </location>
</feature>
<feature type="region of interest" description="In silico-predicted IgE-binding epitope" evidence="4">
    <location>
        <begin position="59"/>
        <end position="66"/>
    </location>
</feature>
<feature type="region of interest" description="In silico-predicted IgE-binding epitope" evidence="4">
    <location>
        <begin position="76"/>
        <end position="81"/>
    </location>
</feature>
<feature type="region of interest" description="In silico-predicted IgE-binding epitope" evidence="4">
    <location>
        <begin position="79"/>
        <end position="85"/>
    </location>
</feature>
<feature type="binding site" evidence="2 5 12">
    <location>
        <position position="52"/>
    </location>
    <ligand>
        <name>Ca(2+)</name>
        <dbReference type="ChEBI" id="CHEBI:29108"/>
        <label>1</label>
    </ligand>
</feature>
<feature type="binding site" evidence="2 5 12">
    <location>
        <position position="54"/>
    </location>
    <ligand>
        <name>Ca(2+)</name>
        <dbReference type="ChEBI" id="CHEBI:29108"/>
        <label>1</label>
    </ligand>
</feature>
<feature type="binding site" evidence="2 5 12">
    <location>
        <position position="56"/>
    </location>
    <ligand>
        <name>Ca(2+)</name>
        <dbReference type="ChEBI" id="CHEBI:29108"/>
        <label>1</label>
    </ligand>
</feature>
<feature type="binding site" evidence="2 5 12">
    <location>
        <position position="58"/>
    </location>
    <ligand>
        <name>Ca(2+)</name>
        <dbReference type="ChEBI" id="CHEBI:29108"/>
        <label>1</label>
    </ligand>
</feature>
<feature type="binding site" evidence="2 5 12">
    <location>
        <position position="60"/>
    </location>
    <ligand>
        <name>Ca(2+)</name>
        <dbReference type="ChEBI" id="CHEBI:29108"/>
        <label>1</label>
    </ligand>
</feature>
<feature type="binding site" evidence="2 5 12">
    <location>
        <position position="63"/>
    </location>
    <ligand>
        <name>Ca(2+)</name>
        <dbReference type="ChEBI" id="CHEBI:29108"/>
        <label>1</label>
    </ligand>
</feature>
<feature type="binding site" evidence="2 5 12">
    <location>
        <position position="91"/>
    </location>
    <ligand>
        <name>Ca(2+)</name>
        <dbReference type="ChEBI" id="CHEBI:29108"/>
        <label>2</label>
    </ligand>
</feature>
<feature type="binding site" evidence="2 5 12">
    <location>
        <position position="93"/>
    </location>
    <ligand>
        <name>Ca(2+)</name>
        <dbReference type="ChEBI" id="CHEBI:29108"/>
        <label>2</label>
    </ligand>
</feature>
<feature type="binding site" evidence="2 5 12">
    <location>
        <position position="95"/>
    </location>
    <ligand>
        <name>Ca(2+)</name>
        <dbReference type="ChEBI" id="CHEBI:29108"/>
        <label>2</label>
    </ligand>
</feature>
<feature type="binding site" evidence="2 5 12">
    <location>
        <position position="97"/>
    </location>
    <ligand>
        <name>Ca(2+)</name>
        <dbReference type="ChEBI" id="CHEBI:29108"/>
        <label>2</label>
    </ligand>
</feature>
<feature type="binding site" evidence="2 5 12">
    <location>
        <position position="102"/>
    </location>
    <ligand>
        <name>Ca(2+)</name>
        <dbReference type="ChEBI" id="CHEBI:29108"/>
        <label>2</label>
    </ligand>
</feature>
<keyword id="KW-0002">3D-structure</keyword>
<keyword id="KW-0020">Allergen</keyword>
<keyword id="KW-0106">Calcium</keyword>
<keyword id="KW-0479">Metal-binding</keyword>
<keyword id="KW-0514">Muscle protein</keyword>
<keyword id="KW-1185">Reference proteome</keyword>
<keyword id="KW-0677">Repeat</keyword>
<organism evidence="10 11">
    <name type="scientific">Crocodylus porosus</name>
    <name type="common">Saltwater crocodile</name>
    <name type="synonym">Estuarine crocodile</name>
    <dbReference type="NCBI Taxonomy" id="8502"/>
    <lineage>
        <taxon>Eukaryota</taxon>
        <taxon>Metazoa</taxon>
        <taxon>Chordata</taxon>
        <taxon>Craniata</taxon>
        <taxon>Vertebrata</taxon>
        <taxon>Euteleostomi</taxon>
        <taxon>Archelosauria</taxon>
        <taxon>Archosauria</taxon>
        <taxon>Crocodylia</taxon>
        <taxon>Longirostres</taxon>
        <taxon>Crocodylidae</taxon>
        <taxon>Crocodylus</taxon>
    </lineage>
</organism>
<proteinExistence type="evidence at protein level"/>
<name>PRVB_CROPO</name>
<accession>A0A7M4EAX1</accession>
<gene>
    <name evidence="10" type="primary">LOC109314825</name>
</gene>
<dbReference type="EMBL" id="MDVP01000047">
    <property type="status" value="NOT_ANNOTATED_CDS"/>
    <property type="molecule type" value="Genomic_DNA"/>
</dbReference>
<dbReference type="RefSeq" id="XP_019397705.1">
    <property type="nucleotide sequence ID" value="XM_019542160.1"/>
</dbReference>
<dbReference type="PDB" id="9BCF">
    <property type="method" value="X-ray"/>
    <property type="resolution" value="3.20 A"/>
    <property type="chains" value="A/B/C=2-109"/>
</dbReference>
<dbReference type="PDBsum" id="9BCF"/>
<dbReference type="SMR" id="A0A7M4EAX1"/>
<dbReference type="Ensembl" id="ENSCPRT00005008265.1">
    <property type="protein sequence ID" value="ENSCPRP00005007053.1"/>
    <property type="gene ID" value="ENSCPRG00005005008.1"/>
</dbReference>
<dbReference type="GeneID" id="109314825"/>
<dbReference type="KEGG" id="cpoo:109314825"/>
<dbReference type="GeneTree" id="ENSGT00940000165760"/>
<dbReference type="OMA" id="AFYIIDQ"/>
<dbReference type="OrthoDB" id="26525at2759"/>
<dbReference type="Proteomes" id="UP000594220">
    <property type="component" value="Unplaced"/>
</dbReference>
<dbReference type="GO" id="GO:0005737">
    <property type="term" value="C:cytoplasm"/>
    <property type="evidence" value="ECO:0007669"/>
    <property type="project" value="TreeGrafter"/>
</dbReference>
<dbReference type="GO" id="GO:0005509">
    <property type="term" value="F:calcium ion binding"/>
    <property type="evidence" value="ECO:0007669"/>
    <property type="project" value="UniProtKB-UniRule"/>
</dbReference>
<dbReference type="CDD" id="cd16255">
    <property type="entry name" value="EFh_parvalbumin_beta"/>
    <property type="match status" value="1"/>
</dbReference>
<dbReference type="FunFam" id="1.10.238.10:FF:000060">
    <property type="entry name" value="Parvalbumin, thymic"/>
    <property type="match status" value="1"/>
</dbReference>
<dbReference type="Gene3D" id="1.10.238.10">
    <property type="entry name" value="EF-hand"/>
    <property type="match status" value="1"/>
</dbReference>
<dbReference type="InterPro" id="IPR011992">
    <property type="entry name" value="EF-hand-dom_pair"/>
</dbReference>
<dbReference type="InterPro" id="IPR018247">
    <property type="entry name" value="EF_Hand_1_Ca_BS"/>
</dbReference>
<dbReference type="InterPro" id="IPR002048">
    <property type="entry name" value="EF_hand_dom"/>
</dbReference>
<dbReference type="InterPro" id="IPR008080">
    <property type="entry name" value="Parvalbumin"/>
</dbReference>
<dbReference type="PANTHER" id="PTHR11653">
    <property type="entry name" value="PARVALBUMIN ALPHA"/>
    <property type="match status" value="1"/>
</dbReference>
<dbReference type="PANTHER" id="PTHR11653:SF3">
    <property type="entry name" value="PARVALBUMIN, THYMIC"/>
    <property type="match status" value="1"/>
</dbReference>
<dbReference type="Pfam" id="PF13499">
    <property type="entry name" value="EF-hand_7"/>
    <property type="match status" value="1"/>
</dbReference>
<dbReference type="PRINTS" id="PR01697">
    <property type="entry name" value="PARVALBUMIN"/>
</dbReference>
<dbReference type="SMART" id="SM00054">
    <property type="entry name" value="EFh"/>
    <property type="match status" value="2"/>
</dbReference>
<dbReference type="SUPFAM" id="SSF47473">
    <property type="entry name" value="EF-hand"/>
    <property type="match status" value="1"/>
</dbReference>
<dbReference type="PROSITE" id="PS00018">
    <property type="entry name" value="EF_HAND_1"/>
    <property type="match status" value="2"/>
</dbReference>
<dbReference type="PROSITE" id="PS50222">
    <property type="entry name" value="EF_HAND_2"/>
    <property type="match status" value="2"/>
</dbReference>